<organism>
    <name type="scientific">Halobacterium salinarum (strain ATCC 700922 / JCM 11081 / NRC-1)</name>
    <name type="common">Halobacterium halobium</name>
    <dbReference type="NCBI Taxonomy" id="64091"/>
    <lineage>
        <taxon>Archaea</taxon>
        <taxon>Methanobacteriati</taxon>
        <taxon>Methanobacteriota</taxon>
        <taxon>Stenosarchaea group</taxon>
        <taxon>Halobacteria</taxon>
        <taxon>Halobacteriales</taxon>
        <taxon>Halobacteriaceae</taxon>
        <taxon>Halobacterium</taxon>
        <taxon>Halobacterium salinarum NRC-34001</taxon>
    </lineage>
</organism>
<dbReference type="EC" id="2.3.1.234" evidence="1"/>
<dbReference type="EC" id="2.7.11.1" evidence="1"/>
<dbReference type="EMBL" id="AE004437">
    <property type="protein sequence ID" value="AAG20204.1"/>
    <property type="status" value="ALT_INIT"/>
    <property type="molecule type" value="Genomic_DNA"/>
</dbReference>
<dbReference type="PIR" id="H84354">
    <property type="entry name" value="H84354"/>
</dbReference>
<dbReference type="RefSeq" id="WP_010903505.1">
    <property type="nucleotide sequence ID" value="NC_002607.1"/>
</dbReference>
<dbReference type="SMR" id="Q9HNL6"/>
<dbReference type="FunCoup" id="Q9HNL6">
    <property type="interactions" value="135"/>
</dbReference>
<dbReference type="STRING" id="64091.VNG_2045G"/>
<dbReference type="PaxDb" id="64091-VNG_2045G"/>
<dbReference type="KEGG" id="hal:VNG_2045G"/>
<dbReference type="PATRIC" id="fig|64091.14.peg.1561"/>
<dbReference type="HOGENOM" id="CLU_023208_2_2_2"/>
<dbReference type="InParanoid" id="Q9HNL6"/>
<dbReference type="OrthoDB" id="6818at2157"/>
<dbReference type="PhylomeDB" id="Q9HNL6"/>
<dbReference type="Proteomes" id="UP000000554">
    <property type="component" value="Chromosome"/>
</dbReference>
<dbReference type="GO" id="GO:0005737">
    <property type="term" value="C:cytoplasm"/>
    <property type="evidence" value="ECO:0000318"/>
    <property type="project" value="GO_Central"/>
</dbReference>
<dbReference type="GO" id="GO:0000408">
    <property type="term" value="C:EKC/KEOPS complex"/>
    <property type="evidence" value="ECO:0000318"/>
    <property type="project" value="GO_Central"/>
</dbReference>
<dbReference type="GO" id="GO:0005524">
    <property type="term" value="F:ATP binding"/>
    <property type="evidence" value="ECO:0007669"/>
    <property type="project" value="UniProtKB-UniRule"/>
</dbReference>
<dbReference type="GO" id="GO:0005506">
    <property type="term" value="F:iron ion binding"/>
    <property type="evidence" value="ECO:0007669"/>
    <property type="project" value="UniProtKB-UniRule"/>
</dbReference>
<dbReference type="GO" id="GO:0004222">
    <property type="term" value="F:metalloendopeptidase activity"/>
    <property type="evidence" value="ECO:0007669"/>
    <property type="project" value="InterPro"/>
</dbReference>
<dbReference type="GO" id="GO:0061711">
    <property type="term" value="F:N(6)-L-threonylcarbamoyladenine synthase activity"/>
    <property type="evidence" value="ECO:0007669"/>
    <property type="project" value="UniProtKB-EC"/>
</dbReference>
<dbReference type="GO" id="GO:0106310">
    <property type="term" value="F:protein serine kinase activity"/>
    <property type="evidence" value="ECO:0007669"/>
    <property type="project" value="RHEA"/>
</dbReference>
<dbReference type="GO" id="GO:0004674">
    <property type="term" value="F:protein serine/threonine kinase activity"/>
    <property type="evidence" value="ECO:0007669"/>
    <property type="project" value="UniProtKB-KW"/>
</dbReference>
<dbReference type="GO" id="GO:0004712">
    <property type="term" value="F:protein serine/threonine/tyrosine kinase activity"/>
    <property type="evidence" value="ECO:0007669"/>
    <property type="project" value="UniProtKB-UniRule"/>
</dbReference>
<dbReference type="GO" id="GO:0008270">
    <property type="term" value="F:zinc ion binding"/>
    <property type="evidence" value="ECO:0007669"/>
    <property type="project" value="InterPro"/>
</dbReference>
<dbReference type="GO" id="GO:0002949">
    <property type="term" value="P:tRNA threonylcarbamoyladenosine modification"/>
    <property type="evidence" value="ECO:0007669"/>
    <property type="project" value="UniProtKB-UniRule"/>
</dbReference>
<dbReference type="Gene3D" id="3.30.420.40">
    <property type="match status" value="2"/>
</dbReference>
<dbReference type="Gene3D" id="3.30.200.20">
    <property type="entry name" value="Phosphorylase Kinase, domain 1"/>
    <property type="match status" value="1"/>
</dbReference>
<dbReference type="Gene3D" id="1.10.510.10">
    <property type="entry name" value="Transferase(Phosphotransferase) domain 1"/>
    <property type="match status" value="1"/>
</dbReference>
<dbReference type="HAMAP" id="MF_01446">
    <property type="entry name" value="Kae1"/>
    <property type="match status" value="1"/>
</dbReference>
<dbReference type="HAMAP" id="MF_01447">
    <property type="entry name" value="Kae1_Bud32_arch"/>
    <property type="match status" value="1"/>
</dbReference>
<dbReference type="InterPro" id="IPR002575">
    <property type="entry name" value="Aminoglycoside_PTrfase"/>
</dbReference>
<dbReference type="InterPro" id="IPR043129">
    <property type="entry name" value="ATPase_NBD"/>
</dbReference>
<dbReference type="InterPro" id="IPR022495">
    <property type="entry name" value="Bud32"/>
</dbReference>
<dbReference type="InterPro" id="IPR000905">
    <property type="entry name" value="Gcp-like_dom"/>
</dbReference>
<dbReference type="InterPro" id="IPR017861">
    <property type="entry name" value="KAE1/TsaD"/>
</dbReference>
<dbReference type="InterPro" id="IPR034680">
    <property type="entry name" value="Kae1_archaea_euk"/>
</dbReference>
<dbReference type="InterPro" id="IPR011009">
    <property type="entry name" value="Kinase-like_dom_sf"/>
</dbReference>
<dbReference type="InterPro" id="IPR017860">
    <property type="entry name" value="Peptidase_M22_CS"/>
</dbReference>
<dbReference type="InterPro" id="IPR009220">
    <property type="entry name" value="tRNA_threonyl_synthase/kinase"/>
</dbReference>
<dbReference type="NCBIfam" id="TIGR03724">
    <property type="entry name" value="arch_bud32"/>
    <property type="match status" value="1"/>
</dbReference>
<dbReference type="NCBIfam" id="TIGR03722">
    <property type="entry name" value="arch_KAE1"/>
    <property type="match status" value="1"/>
</dbReference>
<dbReference type="NCBIfam" id="TIGR00329">
    <property type="entry name" value="gcp_kae1"/>
    <property type="match status" value="1"/>
</dbReference>
<dbReference type="NCBIfam" id="NF007174">
    <property type="entry name" value="PRK09605.1"/>
    <property type="match status" value="1"/>
</dbReference>
<dbReference type="NCBIfam" id="NF011462">
    <property type="entry name" value="PRK14879.1-3"/>
    <property type="match status" value="1"/>
</dbReference>
<dbReference type="PANTHER" id="PTHR11735">
    <property type="entry name" value="TRNA N6-ADENOSINE THREONYLCARBAMOYLTRANSFERASE"/>
    <property type="match status" value="1"/>
</dbReference>
<dbReference type="PANTHER" id="PTHR11735:SF14">
    <property type="entry name" value="TRNA N6-ADENOSINE THREONYLCARBAMOYLTRANSFERASE"/>
    <property type="match status" value="1"/>
</dbReference>
<dbReference type="Pfam" id="PF01636">
    <property type="entry name" value="APH"/>
    <property type="match status" value="1"/>
</dbReference>
<dbReference type="Pfam" id="PF00814">
    <property type="entry name" value="TsaD"/>
    <property type="match status" value="1"/>
</dbReference>
<dbReference type="PIRSF" id="PIRSF036401">
    <property type="entry name" value="Gcp_STYKS"/>
    <property type="match status" value="1"/>
</dbReference>
<dbReference type="PRINTS" id="PR00789">
    <property type="entry name" value="OSIALOPTASE"/>
</dbReference>
<dbReference type="SUPFAM" id="SSF53067">
    <property type="entry name" value="Actin-like ATPase domain"/>
    <property type="match status" value="1"/>
</dbReference>
<dbReference type="SUPFAM" id="SSF56112">
    <property type="entry name" value="Protein kinase-like (PK-like)"/>
    <property type="match status" value="1"/>
</dbReference>
<dbReference type="PROSITE" id="PS01016">
    <property type="entry name" value="GLYCOPROTEASE"/>
    <property type="match status" value="1"/>
</dbReference>
<proteinExistence type="inferred from homology"/>
<reference key="1">
    <citation type="journal article" date="2000" name="Proc. Natl. Acad. Sci. U.S.A.">
        <title>Genome sequence of Halobacterium species NRC-1.</title>
        <authorList>
            <person name="Ng W.V."/>
            <person name="Kennedy S.P."/>
            <person name="Mahairas G.G."/>
            <person name="Berquist B."/>
            <person name="Pan M."/>
            <person name="Shukla H.D."/>
            <person name="Lasky S.R."/>
            <person name="Baliga N.S."/>
            <person name="Thorsson V."/>
            <person name="Sbrogna J."/>
            <person name="Swartzell S."/>
            <person name="Weir D."/>
            <person name="Hall J."/>
            <person name="Dahl T.A."/>
            <person name="Welti R."/>
            <person name="Goo Y.A."/>
            <person name="Leithauser B."/>
            <person name="Keller K."/>
            <person name="Cruz R."/>
            <person name="Danson M.J."/>
            <person name="Hough D.W."/>
            <person name="Maddocks D.G."/>
            <person name="Jablonski P.E."/>
            <person name="Krebs M.P."/>
            <person name="Angevine C.M."/>
            <person name="Dale H."/>
            <person name="Isenbarger T.A."/>
            <person name="Peck R.F."/>
            <person name="Pohlschroder M."/>
            <person name="Spudich J.L."/>
            <person name="Jung K.-H."/>
            <person name="Alam M."/>
            <person name="Freitas T."/>
            <person name="Hou S."/>
            <person name="Daniels C.J."/>
            <person name="Dennis P.P."/>
            <person name="Omer A.D."/>
            <person name="Ebhardt H."/>
            <person name="Lowe T.M."/>
            <person name="Liang P."/>
            <person name="Riley M."/>
            <person name="Hood L."/>
            <person name="DasSarma S."/>
        </authorList>
    </citation>
    <scope>NUCLEOTIDE SEQUENCE [LARGE SCALE GENOMIC DNA]</scope>
    <source>
        <strain>ATCC 700922 / JCM 11081 / NRC-1</strain>
    </source>
</reference>
<comment type="function">
    <text evidence="1">Required for the formation of a threonylcarbamoyl group on adenosine at position 37 (t(6)A37) in tRNAs that read codons beginning with adenine. Is a component of the KEOPS complex that is probably involved in the transfer of the threonylcarbamoyl moiety of threonylcarbamoyl-AMP (TC-AMP) to the N6 group of A37. The Kae1 domain likely plays a direct catalytic role in this reaction. The Bud32 domain probably displays kinase activity that regulates Kae1 function.</text>
</comment>
<comment type="catalytic activity">
    <reaction evidence="1">
        <text>L-seryl-[protein] + ATP = O-phospho-L-seryl-[protein] + ADP + H(+)</text>
        <dbReference type="Rhea" id="RHEA:17989"/>
        <dbReference type="Rhea" id="RHEA-COMP:9863"/>
        <dbReference type="Rhea" id="RHEA-COMP:11604"/>
        <dbReference type="ChEBI" id="CHEBI:15378"/>
        <dbReference type="ChEBI" id="CHEBI:29999"/>
        <dbReference type="ChEBI" id="CHEBI:30616"/>
        <dbReference type="ChEBI" id="CHEBI:83421"/>
        <dbReference type="ChEBI" id="CHEBI:456216"/>
        <dbReference type="EC" id="2.7.11.1"/>
    </reaction>
</comment>
<comment type="catalytic activity">
    <reaction evidence="1">
        <text>L-threonyl-[protein] + ATP = O-phospho-L-threonyl-[protein] + ADP + H(+)</text>
        <dbReference type="Rhea" id="RHEA:46608"/>
        <dbReference type="Rhea" id="RHEA-COMP:11060"/>
        <dbReference type="Rhea" id="RHEA-COMP:11605"/>
        <dbReference type="ChEBI" id="CHEBI:15378"/>
        <dbReference type="ChEBI" id="CHEBI:30013"/>
        <dbReference type="ChEBI" id="CHEBI:30616"/>
        <dbReference type="ChEBI" id="CHEBI:61977"/>
        <dbReference type="ChEBI" id="CHEBI:456216"/>
        <dbReference type="EC" id="2.7.11.1"/>
    </reaction>
</comment>
<comment type="catalytic activity">
    <reaction evidence="1">
        <text>L-threonylcarbamoyladenylate + adenosine(37) in tRNA = N(6)-L-threonylcarbamoyladenosine(37) in tRNA + AMP + H(+)</text>
        <dbReference type="Rhea" id="RHEA:37059"/>
        <dbReference type="Rhea" id="RHEA-COMP:10162"/>
        <dbReference type="Rhea" id="RHEA-COMP:10163"/>
        <dbReference type="ChEBI" id="CHEBI:15378"/>
        <dbReference type="ChEBI" id="CHEBI:73682"/>
        <dbReference type="ChEBI" id="CHEBI:74411"/>
        <dbReference type="ChEBI" id="CHEBI:74418"/>
        <dbReference type="ChEBI" id="CHEBI:456215"/>
        <dbReference type="EC" id="2.3.1.234"/>
    </reaction>
</comment>
<comment type="cofactor">
    <cofactor evidence="1">
        <name>Fe(2+)</name>
        <dbReference type="ChEBI" id="CHEBI:29033"/>
    </cofactor>
    <text evidence="1">Binds 1 Fe(2+) ion per subunit.</text>
</comment>
<comment type="subunit">
    <text evidence="1">Component of the KEOPS complex that consists of Kae1, Bud32, Cgi121 and Pcc1; the whole complex dimerizes.</text>
</comment>
<comment type="subcellular location">
    <subcellularLocation>
        <location evidence="1">Cytoplasm</location>
    </subcellularLocation>
</comment>
<comment type="similarity">
    <text evidence="1">In the N-terminal section; belongs to the KAE1 / TsaD family.</text>
</comment>
<comment type="similarity">
    <text evidence="1">In the C-terminal section; belongs to the protein kinase superfamily. Tyr protein kinase family. BUD32 subfamily.</text>
</comment>
<comment type="sequence caution" evidence="2">
    <conflict type="erroneous initiation">
        <sequence resource="EMBL-CDS" id="AAG20204"/>
    </conflict>
    <text>Truncated N-terminus.</text>
</comment>
<evidence type="ECO:0000255" key="1">
    <source>
        <dbReference type="HAMAP-Rule" id="MF_01447"/>
    </source>
</evidence>
<evidence type="ECO:0000305" key="2"/>
<gene>
    <name type="ordered locus">VNG_2045G</name>
</gene>
<name>KAE1B_HALSA</name>
<feature type="chain" id="PRO_0000096978" description="Probable bifunctional tRNA threonylcarbamoyladenosine biosynthesis protein">
    <location>
        <begin position="1"/>
        <end position="532"/>
    </location>
</feature>
<feature type="domain" description="Protein kinase" evidence="1">
    <location>
        <begin position="329"/>
        <end position="532"/>
    </location>
</feature>
<feature type="region of interest" description="Kae1">
    <location>
        <begin position="1"/>
        <end position="323"/>
    </location>
</feature>
<feature type="active site" description="Proton acceptor; for kinase activity" evidence="1">
    <location>
        <position position="444"/>
    </location>
</feature>
<feature type="binding site" evidence="1">
    <location>
        <position position="107"/>
    </location>
    <ligand>
        <name>Fe cation</name>
        <dbReference type="ChEBI" id="CHEBI:24875"/>
    </ligand>
</feature>
<feature type="binding site" evidence="1">
    <location>
        <position position="111"/>
    </location>
    <ligand>
        <name>Fe cation</name>
        <dbReference type="ChEBI" id="CHEBI:24875"/>
    </ligand>
</feature>
<feature type="binding site" evidence="1">
    <location>
        <begin position="128"/>
        <end position="132"/>
    </location>
    <ligand>
        <name>L-threonylcarbamoyladenylate</name>
        <dbReference type="ChEBI" id="CHEBI:73682"/>
    </ligand>
</feature>
<feature type="binding site" evidence="1">
    <location>
        <position position="160"/>
    </location>
    <ligand>
        <name>L-threonylcarbamoyladenylate</name>
        <dbReference type="ChEBI" id="CHEBI:73682"/>
    </ligand>
</feature>
<feature type="binding site" evidence="1">
    <location>
        <position position="173"/>
    </location>
    <ligand>
        <name>L-threonylcarbamoyladenylate</name>
        <dbReference type="ChEBI" id="CHEBI:73682"/>
    </ligand>
</feature>
<feature type="binding site" evidence="1">
    <location>
        <position position="177"/>
    </location>
    <ligand>
        <name>L-threonylcarbamoyladenylate</name>
        <dbReference type="ChEBI" id="CHEBI:73682"/>
    </ligand>
</feature>
<feature type="binding site" evidence="1">
    <location>
        <position position="256"/>
    </location>
    <ligand>
        <name>L-threonylcarbamoyladenylate</name>
        <dbReference type="ChEBI" id="CHEBI:73682"/>
    </ligand>
</feature>
<feature type="binding site" evidence="1">
    <location>
        <position position="284"/>
    </location>
    <ligand>
        <name>Fe cation</name>
        <dbReference type="ChEBI" id="CHEBI:24875"/>
    </ligand>
</feature>
<feature type="binding site" evidence="1">
    <location>
        <begin position="338"/>
        <end position="346"/>
    </location>
    <ligand>
        <name>ATP</name>
        <dbReference type="ChEBI" id="CHEBI:30616"/>
    </ligand>
</feature>
<feature type="binding site" evidence="1">
    <location>
        <position position="355"/>
    </location>
    <ligand>
        <name>ATP</name>
        <dbReference type="ChEBI" id="CHEBI:30616"/>
    </ligand>
</feature>
<protein>
    <recommendedName>
        <fullName evidence="1">Probable bifunctional tRNA threonylcarbamoyladenosine biosynthesis protein</fullName>
    </recommendedName>
    <domain>
        <recommendedName>
            <fullName evidence="1">tRNA N6-adenosine threonylcarbamoyltransferase</fullName>
            <ecNumber evidence="1">2.3.1.234</ecNumber>
        </recommendedName>
        <alternativeName>
            <fullName>N6-L-threonylcarbamoyladenine synthase</fullName>
            <shortName>t(6)A synthase</shortName>
        </alternativeName>
        <alternativeName>
            <fullName evidence="1">t(6)A37 threonylcarbamoyladenosine biosynthesis protein Kae1</fullName>
        </alternativeName>
        <alternativeName>
            <fullName evidence="1">tRNA threonylcarbamoyladenosine biosynthesis protein Kae1</fullName>
        </alternativeName>
    </domain>
    <domain>
        <recommendedName>
            <fullName evidence="1">Serine/threonine-protein kinase Bud32</fullName>
            <ecNumber evidence="1">2.7.11.1</ecNumber>
        </recommendedName>
    </domain>
</protein>
<keyword id="KW-0012">Acyltransferase</keyword>
<keyword id="KW-0067">ATP-binding</keyword>
<keyword id="KW-0963">Cytoplasm</keyword>
<keyword id="KW-0408">Iron</keyword>
<keyword id="KW-0418">Kinase</keyword>
<keyword id="KW-0479">Metal-binding</keyword>
<keyword id="KW-0511">Multifunctional enzyme</keyword>
<keyword id="KW-0547">Nucleotide-binding</keyword>
<keyword id="KW-1185">Reference proteome</keyword>
<keyword id="KW-0723">Serine/threonine-protein kinase</keyword>
<keyword id="KW-0808">Transferase</keyword>
<keyword id="KW-0819">tRNA processing</keyword>
<accession>Q9HNL6</accession>
<sequence length="532" mass="56592">MRVLGVEGTAWCASAALYDADAAADSVVIESDAYQPDSGGIHPREAAEHMREAIPAVIETVLGAADGDIDAVAFSRGPGLGPCLRIVGSAARALAQALDVPLVGVNHMVAHLEIGRHQSGFQQPVCLNASGANAHVLAYRNGRYRVLGETMDTGVGNAIDKFTRHVGWQHPGGPKVETHARDGEYTALPYVVKGMDFSFSGIMSAAKDAVDDGVPVADVCRGLEETMFAMLTEVAERALALTGRDELVLGGGVGQNDRLRGMLEAMCAARGASFHAPEPRFLRDNAGMIAVLGAKMAAAGATIPVADSAINSQFRPDEVSVTWRDPESPARDPGADAVRQGAEATVTFADDAVIKERAPKAYRHDRLDDRLRRDRTVLEARLTSDARRQGVPTPLVRDVDVPAATITLQHVGDADLRDALSPARVRAVGRHLATIHDGGFVHGDPTTRNVRVGAERTFLIDFGLGYYTDAVEDYAMDCHVFEQSLVGTAADADALVAAFEDAYEEAAASGRVLDQLRAVEGRGRYQDDPETA</sequence>